<proteinExistence type="inferred from homology"/>
<comment type="function">
    <text evidence="2">Carrier of the growing fatty acid chain in fatty acid biosynthesis.</text>
</comment>
<comment type="pathway">
    <text evidence="2">Lipid metabolism; fatty acid biosynthesis.</text>
</comment>
<comment type="subcellular location">
    <subcellularLocation>
        <location evidence="2">Cytoplasm</location>
    </subcellularLocation>
</comment>
<comment type="PTM">
    <text evidence="2">4'-phosphopantetheine is transferred from CoA to a specific serine of apo-ACP by AcpS. This modification is essential for activity because fatty acids are bound in thioester linkage to the sulfhydryl of the prosthetic group.</text>
</comment>
<comment type="similarity">
    <text evidence="2">Belongs to the acyl carrier protein (ACP) family.</text>
</comment>
<keyword id="KW-0963">Cytoplasm</keyword>
<keyword id="KW-0275">Fatty acid biosynthesis</keyword>
<keyword id="KW-0276">Fatty acid metabolism</keyword>
<keyword id="KW-0444">Lipid biosynthesis</keyword>
<keyword id="KW-0443">Lipid metabolism</keyword>
<keyword id="KW-0596">Phosphopantetheine</keyword>
<keyword id="KW-0597">Phosphoprotein</keyword>
<keyword id="KW-1185">Reference proteome</keyword>
<name>ACP_AGRFC</name>
<accession>Q8UGE2</accession>
<feature type="initiator methionine" description="Removed" evidence="1">
    <location>
        <position position="1"/>
    </location>
</feature>
<feature type="chain" id="PRO_0000180090" description="Acyl carrier protein AcpP">
    <location>
        <begin position="2"/>
        <end position="78"/>
    </location>
</feature>
<feature type="domain" description="Carrier" evidence="3">
    <location>
        <begin position="2"/>
        <end position="77"/>
    </location>
</feature>
<feature type="modified residue" description="O-(pantetheine 4'-phosphoryl)serine" evidence="3">
    <location>
        <position position="37"/>
    </location>
</feature>
<gene>
    <name evidence="2" type="primary">acpP</name>
    <name type="ordered locus">Atu1096</name>
    <name type="ORF">AGR_C_2029.1</name>
</gene>
<dbReference type="EMBL" id="AE007869">
    <property type="protein sequence ID" value="AAL42109.1"/>
    <property type="molecule type" value="Genomic_DNA"/>
</dbReference>
<dbReference type="PIR" id="AG2711">
    <property type="entry name" value="AG2711"/>
</dbReference>
<dbReference type="RefSeq" id="NP_529008.1">
    <property type="nucleotide sequence ID" value="NC_003062.2"/>
</dbReference>
<dbReference type="RefSeq" id="WP_003502080.1">
    <property type="nucleotide sequence ID" value="NC_003062.2"/>
</dbReference>
<dbReference type="SMR" id="Q8UGE2"/>
<dbReference type="STRING" id="176299.Atu1096"/>
<dbReference type="EnsemblBacteria" id="AAL42109">
    <property type="protein sequence ID" value="AAL42109"/>
    <property type="gene ID" value="Atu1096"/>
</dbReference>
<dbReference type="KEGG" id="atu:Atu1096"/>
<dbReference type="PATRIC" id="fig|176299.10.peg.1112"/>
<dbReference type="eggNOG" id="COG0236">
    <property type="taxonomic scope" value="Bacteria"/>
</dbReference>
<dbReference type="HOGENOM" id="CLU_108696_5_1_5"/>
<dbReference type="OrthoDB" id="9804551at2"/>
<dbReference type="PhylomeDB" id="Q8UGE2"/>
<dbReference type="BioCyc" id="AGRO:ATU1096-MONOMER"/>
<dbReference type="UniPathway" id="UPA00094"/>
<dbReference type="PRO" id="PR:Q8UGE2"/>
<dbReference type="Proteomes" id="UP000000813">
    <property type="component" value="Chromosome circular"/>
</dbReference>
<dbReference type="GO" id="GO:0005829">
    <property type="term" value="C:cytosol"/>
    <property type="evidence" value="ECO:0007669"/>
    <property type="project" value="TreeGrafter"/>
</dbReference>
<dbReference type="GO" id="GO:0016020">
    <property type="term" value="C:membrane"/>
    <property type="evidence" value="ECO:0007669"/>
    <property type="project" value="GOC"/>
</dbReference>
<dbReference type="GO" id="GO:0000035">
    <property type="term" value="F:acyl binding"/>
    <property type="evidence" value="ECO:0007669"/>
    <property type="project" value="TreeGrafter"/>
</dbReference>
<dbReference type="GO" id="GO:0000036">
    <property type="term" value="F:acyl carrier activity"/>
    <property type="evidence" value="ECO:0007669"/>
    <property type="project" value="UniProtKB-UniRule"/>
</dbReference>
<dbReference type="GO" id="GO:0031177">
    <property type="term" value="F:phosphopantetheine binding"/>
    <property type="evidence" value="ECO:0007669"/>
    <property type="project" value="InterPro"/>
</dbReference>
<dbReference type="GO" id="GO:0009245">
    <property type="term" value="P:lipid A biosynthetic process"/>
    <property type="evidence" value="ECO:0007669"/>
    <property type="project" value="TreeGrafter"/>
</dbReference>
<dbReference type="FunFam" id="1.10.1200.10:FF:000001">
    <property type="entry name" value="Acyl carrier protein"/>
    <property type="match status" value="1"/>
</dbReference>
<dbReference type="Gene3D" id="1.10.1200.10">
    <property type="entry name" value="ACP-like"/>
    <property type="match status" value="1"/>
</dbReference>
<dbReference type="HAMAP" id="MF_01217">
    <property type="entry name" value="Acyl_carrier"/>
    <property type="match status" value="1"/>
</dbReference>
<dbReference type="InterPro" id="IPR003231">
    <property type="entry name" value="ACP"/>
</dbReference>
<dbReference type="InterPro" id="IPR036736">
    <property type="entry name" value="ACP-like_sf"/>
</dbReference>
<dbReference type="InterPro" id="IPR020806">
    <property type="entry name" value="PKS_PP-bd"/>
</dbReference>
<dbReference type="InterPro" id="IPR009081">
    <property type="entry name" value="PP-bd_ACP"/>
</dbReference>
<dbReference type="InterPro" id="IPR006162">
    <property type="entry name" value="Ppantetheine_attach_site"/>
</dbReference>
<dbReference type="NCBIfam" id="TIGR00517">
    <property type="entry name" value="acyl_carrier"/>
    <property type="match status" value="1"/>
</dbReference>
<dbReference type="NCBIfam" id="NF002148">
    <property type="entry name" value="PRK00982.1-2"/>
    <property type="match status" value="1"/>
</dbReference>
<dbReference type="NCBIfam" id="NF002149">
    <property type="entry name" value="PRK00982.1-3"/>
    <property type="match status" value="1"/>
</dbReference>
<dbReference type="NCBIfam" id="NF002150">
    <property type="entry name" value="PRK00982.1-4"/>
    <property type="match status" value="1"/>
</dbReference>
<dbReference type="NCBIfam" id="NF002151">
    <property type="entry name" value="PRK00982.1-5"/>
    <property type="match status" value="1"/>
</dbReference>
<dbReference type="PANTHER" id="PTHR20863">
    <property type="entry name" value="ACYL CARRIER PROTEIN"/>
    <property type="match status" value="1"/>
</dbReference>
<dbReference type="PANTHER" id="PTHR20863:SF76">
    <property type="entry name" value="CARRIER DOMAIN-CONTAINING PROTEIN"/>
    <property type="match status" value="1"/>
</dbReference>
<dbReference type="Pfam" id="PF00550">
    <property type="entry name" value="PP-binding"/>
    <property type="match status" value="1"/>
</dbReference>
<dbReference type="SMART" id="SM00823">
    <property type="entry name" value="PKS_PP"/>
    <property type="match status" value="1"/>
</dbReference>
<dbReference type="SUPFAM" id="SSF47336">
    <property type="entry name" value="ACP-like"/>
    <property type="match status" value="1"/>
</dbReference>
<dbReference type="PROSITE" id="PS50075">
    <property type="entry name" value="CARRIER"/>
    <property type="match status" value="1"/>
</dbReference>
<dbReference type="PROSITE" id="PS00012">
    <property type="entry name" value="PHOSPHOPANTETHEINE"/>
    <property type="match status" value="1"/>
</dbReference>
<evidence type="ECO:0000250" key="1"/>
<evidence type="ECO:0000255" key="2">
    <source>
        <dbReference type="HAMAP-Rule" id="MF_01217"/>
    </source>
</evidence>
<evidence type="ECO:0000255" key="3">
    <source>
        <dbReference type="PROSITE-ProRule" id="PRU00258"/>
    </source>
</evidence>
<organism>
    <name type="scientific">Agrobacterium fabrum (strain C58 / ATCC 33970)</name>
    <name type="common">Agrobacterium tumefaciens (strain C58)</name>
    <dbReference type="NCBI Taxonomy" id="176299"/>
    <lineage>
        <taxon>Bacteria</taxon>
        <taxon>Pseudomonadati</taxon>
        <taxon>Pseudomonadota</taxon>
        <taxon>Alphaproteobacteria</taxon>
        <taxon>Hyphomicrobiales</taxon>
        <taxon>Rhizobiaceae</taxon>
        <taxon>Rhizobium/Agrobacterium group</taxon>
        <taxon>Agrobacterium</taxon>
        <taxon>Agrobacterium tumefaciens complex</taxon>
    </lineage>
</organism>
<sequence length="78" mass="8338">MSDIAERVKKIVIDHLGVDADKVVEGASFIDDLGADSLDTVELVMAFEEEFGVEIPDDAADSILTVGDAVKFIEKAQA</sequence>
<reference key="1">
    <citation type="journal article" date="2001" name="Science">
        <title>The genome of the natural genetic engineer Agrobacterium tumefaciens C58.</title>
        <authorList>
            <person name="Wood D.W."/>
            <person name="Setubal J.C."/>
            <person name="Kaul R."/>
            <person name="Monks D.E."/>
            <person name="Kitajima J.P."/>
            <person name="Okura V.K."/>
            <person name="Zhou Y."/>
            <person name="Chen L."/>
            <person name="Wood G.E."/>
            <person name="Almeida N.F. Jr."/>
            <person name="Woo L."/>
            <person name="Chen Y."/>
            <person name="Paulsen I.T."/>
            <person name="Eisen J.A."/>
            <person name="Karp P.D."/>
            <person name="Bovee D. Sr."/>
            <person name="Chapman P."/>
            <person name="Clendenning J."/>
            <person name="Deatherage G."/>
            <person name="Gillet W."/>
            <person name="Grant C."/>
            <person name="Kutyavin T."/>
            <person name="Levy R."/>
            <person name="Li M.-J."/>
            <person name="McClelland E."/>
            <person name="Palmieri A."/>
            <person name="Raymond C."/>
            <person name="Rouse G."/>
            <person name="Saenphimmachak C."/>
            <person name="Wu Z."/>
            <person name="Romero P."/>
            <person name="Gordon D."/>
            <person name="Zhang S."/>
            <person name="Yoo H."/>
            <person name="Tao Y."/>
            <person name="Biddle P."/>
            <person name="Jung M."/>
            <person name="Krespan W."/>
            <person name="Perry M."/>
            <person name="Gordon-Kamm B."/>
            <person name="Liao L."/>
            <person name="Kim S."/>
            <person name="Hendrick C."/>
            <person name="Zhao Z.-Y."/>
            <person name="Dolan M."/>
            <person name="Chumley F."/>
            <person name="Tingey S.V."/>
            <person name="Tomb J.-F."/>
            <person name="Gordon M.P."/>
            <person name="Olson M.V."/>
            <person name="Nester E.W."/>
        </authorList>
    </citation>
    <scope>NUCLEOTIDE SEQUENCE [LARGE SCALE GENOMIC DNA]</scope>
    <source>
        <strain>C58 / ATCC 33970</strain>
    </source>
</reference>
<reference key="2">
    <citation type="journal article" date="2001" name="Science">
        <title>Genome sequence of the plant pathogen and biotechnology agent Agrobacterium tumefaciens C58.</title>
        <authorList>
            <person name="Goodner B."/>
            <person name="Hinkle G."/>
            <person name="Gattung S."/>
            <person name="Miller N."/>
            <person name="Blanchard M."/>
            <person name="Qurollo B."/>
            <person name="Goldman B.S."/>
            <person name="Cao Y."/>
            <person name="Askenazi M."/>
            <person name="Halling C."/>
            <person name="Mullin L."/>
            <person name="Houmiel K."/>
            <person name="Gordon J."/>
            <person name="Vaudin M."/>
            <person name="Iartchouk O."/>
            <person name="Epp A."/>
            <person name="Liu F."/>
            <person name="Wollam C."/>
            <person name="Allinger M."/>
            <person name="Doughty D."/>
            <person name="Scott C."/>
            <person name="Lappas C."/>
            <person name="Markelz B."/>
            <person name="Flanagan C."/>
            <person name="Crowell C."/>
            <person name="Gurson J."/>
            <person name="Lomo C."/>
            <person name="Sear C."/>
            <person name="Strub G."/>
            <person name="Cielo C."/>
            <person name="Slater S."/>
        </authorList>
    </citation>
    <scope>NUCLEOTIDE SEQUENCE [LARGE SCALE GENOMIC DNA]</scope>
    <source>
        <strain>C58 / ATCC 33970</strain>
    </source>
</reference>
<protein>
    <recommendedName>
        <fullName evidence="2">Acyl carrier protein AcpP</fullName>
        <shortName evidence="2">ACP</shortName>
    </recommendedName>
</protein>